<name>ACP_GEOUR</name>
<proteinExistence type="inferred from homology"/>
<evidence type="ECO:0000255" key="1">
    <source>
        <dbReference type="HAMAP-Rule" id="MF_01217"/>
    </source>
</evidence>
<evidence type="ECO:0000255" key="2">
    <source>
        <dbReference type="PROSITE-ProRule" id="PRU00258"/>
    </source>
</evidence>
<organism>
    <name type="scientific">Geotalea uraniireducens (strain Rf4)</name>
    <name type="common">Geobacter uraniireducens</name>
    <dbReference type="NCBI Taxonomy" id="351605"/>
    <lineage>
        <taxon>Bacteria</taxon>
        <taxon>Pseudomonadati</taxon>
        <taxon>Thermodesulfobacteriota</taxon>
        <taxon>Desulfuromonadia</taxon>
        <taxon>Geobacterales</taxon>
        <taxon>Geobacteraceae</taxon>
        <taxon>Geotalea</taxon>
    </lineage>
</organism>
<protein>
    <recommendedName>
        <fullName evidence="1">Acyl carrier protein</fullName>
        <shortName evidence="1">ACP</shortName>
    </recommendedName>
</protein>
<accession>A5GF63</accession>
<dbReference type="EMBL" id="CP000698">
    <property type="protein sequence ID" value="ABQ26068.1"/>
    <property type="molecule type" value="Genomic_DNA"/>
</dbReference>
<dbReference type="RefSeq" id="WP_011938771.1">
    <property type="nucleotide sequence ID" value="NC_009483.1"/>
</dbReference>
<dbReference type="SMR" id="A5GF63"/>
<dbReference type="STRING" id="351605.Gura_1878"/>
<dbReference type="KEGG" id="gur:Gura_1878"/>
<dbReference type="HOGENOM" id="CLU_108696_5_1_7"/>
<dbReference type="OrthoDB" id="9804551at2"/>
<dbReference type="UniPathway" id="UPA00094"/>
<dbReference type="Proteomes" id="UP000006695">
    <property type="component" value="Chromosome"/>
</dbReference>
<dbReference type="GO" id="GO:0005829">
    <property type="term" value="C:cytosol"/>
    <property type="evidence" value="ECO:0007669"/>
    <property type="project" value="TreeGrafter"/>
</dbReference>
<dbReference type="GO" id="GO:0016020">
    <property type="term" value="C:membrane"/>
    <property type="evidence" value="ECO:0007669"/>
    <property type="project" value="GOC"/>
</dbReference>
<dbReference type="GO" id="GO:0000035">
    <property type="term" value="F:acyl binding"/>
    <property type="evidence" value="ECO:0007669"/>
    <property type="project" value="TreeGrafter"/>
</dbReference>
<dbReference type="GO" id="GO:0000036">
    <property type="term" value="F:acyl carrier activity"/>
    <property type="evidence" value="ECO:0007669"/>
    <property type="project" value="UniProtKB-UniRule"/>
</dbReference>
<dbReference type="GO" id="GO:0009245">
    <property type="term" value="P:lipid A biosynthetic process"/>
    <property type="evidence" value="ECO:0007669"/>
    <property type="project" value="TreeGrafter"/>
</dbReference>
<dbReference type="FunFam" id="1.10.1200.10:FF:000001">
    <property type="entry name" value="Acyl carrier protein"/>
    <property type="match status" value="1"/>
</dbReference>
<dbReference type="Gene3D" id="1.10.1200.10">
    <property type="entry name" value="ACP-like"/>
    <property type="match status" value="1"/>
</dbReference>
<dbReference type="HAMAP" id="MF_01217">
    <property type="entry name" value="Acyl_carrier"/>
    <property type="match status" value="1"/>
</dbReference>
<dbReference type="InterPro" id="IPR003231">
    <property type="entry name" value="ACP"/>
</dbReference>
<dbReference type="InterPro" id="IPR036736">
    <property type="entry name" value="ACP-like_sf"/>
</dbReference>
<dbReference type="InterPro" id="IPR009081">
    <property type="entry name" value="PP-bd_ACP"/>
</dbReference>
<dbReference type="InterPro" id="IPR006162">
    <property type="entry name" value="Ppantetheine_attach_site"/>
</dbReference>
<dbReference type="NCBIfam" id="TIGR00517">
    <property type="entry name" value="acyl_carrier"/>
    <property type="match status" value="1"/>
</dbReference>
<dbReference type="NCBIfam" id="NF002148">
    <property type="entry name" value="PRK00982.1-2"/>
    <property type="match status" value="1"/>
</dbReference>
<dbReference type="NCBIfam" id="NF002149">
    <property type="entry name" value="PRK00982.1-3"/>
    <property type="match status" value="1"/>
</dbReference>
<dbReference type="NCBIfam" id="NF002150">
    <property type="entry name" value="PRK00982.1-4"/>
    <property type="match status" value="1"/>
</dbReference>
<dbReference type="NCBIfam" id="NF002151">
    <property type="entry name" value="PRK00982.1-5"/>
    <property type="match status" value="1"/>
</dbReference>
<dbReference type="PANTHER" id="PTHR20863">
    <property type="entry name" value="ACYL CARRIER PROTEIN"/>
    <property type="match status" value="1"/>
</dbReference>
<dbReference type="PANTHER" id="PTHR20863:SF76">
    <property type="entry name" value="CARRIER DOMAIN-CONTAINING PROTEIN"/>
    <property type="match status" value="1"/>
</dbReference>
<dbReference type="Pfam" id="PF00550">
    <property type="entry name" value="PP-binding"/>
    <property type="match status" value="1"/>
</dbReference>
<dbReference type="SUPFAM" id="SSF47336">
    <property type="entry name" value="ACP-like"/>
    <property type="match status" value="1"/>
</dbReference>
<dbReference type="PROSITE" id="PS50075">
    <property type="entry name" value="CARRIER"/>
    <property type="match status" value="1"/>
</dbReference>
<dbReference type="PROSITE" id="PS00012">
    <property type="entry name" value="PHOSPHOPANTETHEINE"/>
    <property type="match status" value="1"/>
</dbReference>
<keyword id="KW-0963">Cytoplasm</keyword>
<keyword id="KW-0275">Fatty acid biosynthesis</keyword>
<keyword id="KW-0276">Fatty acid metabolism</keyword>
<keyword id="KW-0444">Lipid biosynthesis</keyword>
<keyword id="KW-0443">Lipid metabolism</keyword>
<keyword id="KW-0596">Phosphopantetheine</keyword>
<keyword id="KW-0597">Phosphoprotein</keyword>
<keyword id="KW-1185">Reference proteome</keyword>
<sequence>MSSIDKRIKEIVAEQLGVDEGQVTNEASFMDDLGADSLDTVELVMALEEEFDIEISDEDAEKIQSVQDAIDYITDHT</sequence>
<comment type="function">
    <text evidence="1">Carrier of the growing fatty acid chain in fatty acid biosynthesis.</text>
</comment>
<comment type="pathway">
    <text evidence="1">Lipid metabolism; fatty acid biosynthesis.</text>
</comment>
<comment type="subcellular location">
    <subcellularLocation>
        <location evidence="1">Cytoplasm</location>
    </subcellularLocation>
</comment>
<comment type="PTM">
    <text evidence="1">4'-phosphopantetheine is transferred from CoA to a specific serine of apo-ACP by AcpS. This modification is essential for activity because fatty acids are bound in thioester linkage to the sulfhydryl of the prosthetic group.</text>
</comment>
<comment type="similarity">
    <text evidence="1">Belongs to the acyl carrier protein (ACP) family.</text>
</comment>
<feature type="chain" id="PRO_1000085602" description="Acyl carrier protein">
    <location>
        <begin position="1"/>
        <end position="77"/>
    </location>
</feature>
<feature type="domain" description="Carrier" evidence="2">
    <location>
        <begin position="2"/>
        <end position="77"/>
    </location>
</feature>
<feature type="modified residue" description="O-(pantetheine 4'-phosphoryl)serine" evidence="2">
    <location>
        <position position="37"/>
    </location>
</feature>
<reference key="1">
    <citation type="submission" date="2007-05" db="EMBL/GenBank/DDBJ databases">
        <title>Complete sequence of Geobacter uraniireducens Rf4.</title>
        <authorList>
            <consortium name="US DOE Joint Genome Institute"/>
            <person name="Copeland A."/>
            <person name="Lucas S."/>
            <person name="Lapidus A."/>
            <person name="Barry K."/>
            <person name="Detter J.C."/>
            <person name="Glavina del Rio T."/>
            <person name="Hammon N."/>
            <person name="Israni S."/>
            <person name="Dalin E."/>
            <person name="Tice H."/>
            <person name="Pitluck S."/>
            <person name="Chertkov O."/>
            <person name="Brettin T."/>
            <person name="Bruce D."/>
            <person name="Han C."/>
            <person name="Schmutz J."/>
            <person name="Larimer F."/>
            <person name="Land M."/>
            <person name="Hauser L."/>
            <person name="Kyrpides N."/>
            <person name="Mikhailova N."/>
            <person name="Shelobolina E."/>
            <person name="Aklujkar M."/>
            <person name="Lovley D."/>
            <person name="Richardson P."/>
        </authorList>
    </citation>
    <scope>NUCLEOTIDE SEQUENCE [LARGE SCALE GENOMIC DNA]</scope>
    <source>
        <strain>ATCC BAA-1134 / JCM 13001 / Rf4</strain>
    </source>
</reference>
<gene>
    <name evidence="1" type="primary">acpP</name>
    <name type="ordered locus">Gura_1878</name>
</gene>